<comment type="catalytic activity">
    <reaction evidence="1">
        <text>allantoate + H2O = (S)-ureidoglycolate + urea</text>
        <dbReference type="Rhea" id="RHEA:11016"/>
        <dbReference type="ChEBI" id="CHEBI:15377"/>
        <dbReference type="ChEBI" id="CHEBI:16199"/>
        <dbReference type="ChEBI" id="CHEBI:17536"/>
        <dbReference type="ChEBI" id="CHEBI:57296"/>
        <dbReference type="EC" id="3.5.3.4"/>
    </reaction>
</comment>
<comment type="pathway">
    <text evidence="1">Nitrogen metabolism; (S)-allantoin degradation; (S)-ureidoglycolate from allantoate (aminidohydrolase route): step 1/1.</text>
</comment>
<comment type="similarity">
    <text evidence="1">Belongs to the allantoicase family.</text>
</comment>
<accession>Q8XUB7</accession>
<reference key="1">
    <citation type="journal article" date="2002" name="Nature">
        <title>Genome sequence of the plant pathogen Ralstonia solanacearum.</title>
        <authorList>
            <person name="Salanoubat M."/>
            <person name="Genin S."/>
            <person name="Artiguenave F."/>
            <person name="Gouzy J."/>
            <person name="Mangenot S."/>
            <person name="Arlat M."/>
            <person name="Billault A."/>
            <person name="Brottier P."/>
            <person name="Camus J.-C."/>
            <person name="Cattolico L."/>
            <person name="Chandler M."/>
            <person name="Choisne N."/>
            <person name="Claudel-Renard C."/>
            <person name="Cunnac S."/>
            <person name="Demange N."/>
            <person name="Gaspin C."/>
            <person name="Lavie M."/>
            <person name="Moisan A."/>
            <person name="Robert C."/>
            <person name="Saurin W."/>
            <person name="Schiex T."/>
            <person name="Siguier P."/>
            <person name="Thebault P."/>
            <person name="Whalen M."/>
            <person name="Wincker P."/>
            <person name="Levy M."/>
            <person name="Weissenbach J."/>
            <person name="Boucher C.A."/>
        </authorList>
    </citation>
    <scope>NUCLEOTIDE SEQUENCE [LARGE SCALE GENOMIC DNA]</scope>
    <source>
        <strain>ATCC BAA-1114 / GMI1000</strain>
    </source>
</reference>
<name>ALLC_RALN1</name>
<proteinExistence type="inferred from homology"/>
<keyword id="KW-0378">Hydrolase</keyword>
<keyword id="KW-0659">Purine metabolism</keyword>
<keyword id="KW-1185">Reference proteome</keyword>
<organism>
    <name type="scientific">Ralstonia nicotianae (strain ATCC BAA-1114 / GMI1000)</name>
    <name type="common">Ralstonia solanacearum</name>
    <dbReference type="NCBI Taxonomy" id="267608"/>
    <lineage>
        <taxon>Bacteria</taxon>
        <taxon>Pseudomonadati</taxon>
        <taxon>Pseudomonadota</taxon>
        <taxon>Betaproteobacteria</taxon>
        <taxon>Burkholderiales</taxon>
        <taxon>Burkholderiaceae</taxon>
        <taxon>Ralstonia</taxon>
        <taxon>Ralstonia solanacearum species complex</taxon>
    </lineage>
</organism>
<protein>
    <recommendedName>
        <fullName evidence="1">Probable allantoicase</fullName>
        <ecNumber evidence="1">3.5.3.4</ecNumber>
    </recommendedName>
    <alternativeName>
        <fullName evidence="1">Allantoate amidinohydrolase</fullName>
    </alternativeName>
</protein>
<gene>
    <name evidence="1" type="primary">alc</name>
    <name type="ordered locus">RSc3274</name>
    <name type="ORF">RS02503</name>
</gene>
<feature type="chain" id="PRO_0000205926" description="Probable allantoicase">
    <location>
        <begin position="1"/>
        <end position="336"/>
    </location>
</feature>
<dbReference type="EC" id="3.5.3.4" evidence="1"/>
<dbReference type="EMBL" id="AL646052">
    <property type="protein sequence ID" value="CAD17062.1"/>
    <property type="molecule type" value="Genomic_DNA"/>
</dbReference>
<dbReference type="RefSeq" id="WP_011003159.1">
    <property type="nucleotide sequence ID" value="NC_003295.1"/>
</dbReference>
<dbReference type="SMR" id="Q8XUB7"/>
<dbReference type="STRING" id="267608.RSc3274"/>
<dbReference type="EnsemblBacteria" id="CAD17062">
    <property type="protein sequence ID" value="CAD17062"/>
    <property type="gene ID" value="RSc3274"/>
</dbReference>
<dbReference type="KEGG" id="rso:RSc3274"/>
<dbReference type="eggNOG" id="COG4266">
    <property type="taxonomic scope" value="Bacteria"/>
</dbReference>
<dbReference type="HOGENOM" id="CLU_038797_1_2_4"/>
<dbReference type="UniPathway" id="UPA00395">
    <property type="reaction ID" value="UER00654"/>
</dbReference>
<dbReference type="Proteomes" id="UP000001436">
    <property type="component" value="Chromosome"/>
</dbReference>
<dbReference type="GO" id="GO:0004037">
    <property type="term" value="F:allantoicase activity"/>
    <property type="evidence" value="ECO:0007669"/>
    <property type="project" value="UniProtKB-UniRule"/>
</dbReference>
<dbReference type="GO" id="GO:0000256">
    <property type="term" value="P:allantoin catabolic process"/>
    <property type="evidence" value="ECO:0007669"/>
    <property type="project" value="UniProtKB-UniRule"/>
</dbReference>
<dbReference type="GO" id="GO:0006144">
    <property type="term" value="P:purine nucleobase metabolic process"/>
    <property type="evidence" value="ECO:0007669"/>
    <property type="project" value="UniProtKB-KW"/>
</dbReference>
<dbReference type="Gene3D" id="2.60.120.260">
    <property type="entry name" value="Galactose-binding domain-like"/>
    <property type="match status" value="2"/>
</dbReference>
<dbReference type="HAMAP" id="MF_00813">
    <property type="entry name" value="Allantoicase"/>
    <property type="match status" value="1"/>
</dbReference>
<dbReference type="InterPro" id="IPR005164">
    <property type="entry name" value="Allantoicase"/>
</dbReference>
<dbReference type="InterPro" id="IPR015908">
    <property type="entry name" value="Allantoicase_dom"/>
</dbReference>
<dbReference type="InterPro" id="IPR008979">
    <property type="entry name" value="Galactose-bd-like_sf"/>
</dbReference>
<dbReference type="NCBIfam" id="TIGR02961">
    <property type="entry name" value="allantoicase"/>
    <property type="match status" value="1"/>
</dbReference>
<dbReference type="PANTHER" id="PTHR12045">
    <property type="entry name" value="ALLANTOICASE"/>
    <property type="match status" value="1"/>
</dbReference>
<dbReference type="PANTHER" id="PTHR12045:SF3">
    <property type="entry name" value="INACTIVE ALLANTOICASE-RELATED"/>
    <property type="match status" value="1"/>
</dbReference>
<dbReference type="Pfam" id="PF03561">
    <property type="entry name" value="Allantoicase"/>
    <property type="match status" value="2"/>
</dbReference>
<dbReference type="PIRSF" id="PIRSF016516">
    <property type="entry name" value="Allantoicase"/>
    <property type="match status" value="1"/>
</dbReference>
<dbReference type="SUPFAM" id="SSF49785">
    <property type="entry name" value="Galactose-binding domain-like"/>
    <property type="match status" value="2"/>
</dbReference>
<evidence type="ECO:0000255" key="1">
    <source>
        <dbReference type="HAMAP-Rule" id="MF_00813"/>
    </source>
</evidence>
<sequence>MAMPTLDPNAPDFTRRYPNLADPRLGAVATFATDEFFAPKDRMLNPEPAVFIPGKYDDHGKWMDGWETRRRRNGGYDHCIVKLARPGVVKGVDIDTSHFTGNFPPAASIDAAYLPHGEPTDATQWTEIVPSTTLQGNSHHYLDVFGTHAYTHLRVNIYPDGGIARLRVYGQPQVDWKGADRATLFDLAAMENGAYVVEVNNQHFGLASSLLMPGRGINMGDGWETRRRREPGNDWCIIALAHPGRIRKIEVDTAHFKGNFADRVSLQAARVTGGTDATLKTQAMFWQTLLPEQKLQMDHQHYYEAELADLGPVTHVRFNMFPDGGVSRLRLWGALE</sequence>